<gene>
    <name type="primary">RPS23B</name>
    <name type="ordered locus">At5g02960</name>
    <name type="ORF">F9G14_270</name>
</gene>
<comment type="similarity">
    <text evidence="3">Belongs to the universal ribosomal protein uS12 family.</text>
</comment>
<organism>
    <name type="scientific">Arabidopsis thaliana</name>
    <name type="common">Mouse-ear cress</name>
    <dbReference type="NCBI Taxonomy" id="3702"/>
    <lineage>
        <taxon>Eukaryota</taxon>
        <taxon>Viridiplantae</taxon>
        <taxon>Streptophyta</taxon>
        <taxon>Embryophyta</taxon>
        <taxon>Tracheophyta</taxon>
        <taxon>Spermatophyta</taxon>
        <taxon>Magnoliopsida</taxon>
        <taxon>eudicotyledons</taxon>
        <taxon>Gunneridae</taxon>
        <taxon>Pentapetalae</taxon>
        <taxon>rosids</taxon>
        <taxon>malvids</taxon>
        <taxon>Brassicales</taxon>
        <taxon>Brassicaceae</taxon>
        <taxon>Camelineae</taxon>
        <taxon>Arabidopsis</taxon>
    </lineage>
</organism>
<keyword id="KW-0379">Hydroxylation</keyword>
<keyword id="KW-1185">Reference proteome</keyword>
<keyword id="KW-0687">Ribonucleoprotein</keyword>
<keyword id="KW-0689">Ribosomal protein</keyword>
<accession>P49201</accession>
<accession>Q9LYY9</accession>
<proteinExistence type="evidence at transcript level"/>
<name>RS232_ARATH</name>
<evidence type="ECO:0000250" key="1"/>
<evidence type="ECO:0000303" key="2">
    <source>
    </source>
</evidence>
<evidence type="ECO:0000305" key="3"/>
<sequence>MGKTRGMGAGRKLKRLRINQRWADKQYKKSHLGNEWKKPFAGSSHAKGIVLEKIGIEAKQPNSAIRKCARVQLIKNGKKIAAFVPNDGCLNYIEENDEVLIAGFGRKGHAVGDIPGVRFKVVKVSGVSLLALFKEKKEKPRS</sequence>
<reference key="1">
    <citation type="journal article" date="2000" name="Nature">
        <title>Sequence and analysis of chromosome 5 of the plant Arabidopsis thaliana.</title>
        <authorList>
            <person name="Tabata S."/>
            <person name="Kaneko T."/>
            <person name="Nakamura Y."/>
            <person name="Kotani H."/>
            <person name="Kato T."/>
            <person name="Asamizu E."/>
            <person name="Miyajima N."/>
            <person name="Sasamoto S."/>
            <person name="Kimura T."/>
            <person name="Hosouchi T."/>
            <person name="Kawashima K."/>
            <person name="Kohara M."/>
            <person name="Matsumoto M."/>
            <person name="Matsuno A."/>
            <person name="Muraki A."/>
            <person name="Nakayama S."/>
            <person name="Nakazaki N."/>
            <person name="Naruo K."/>
            <person name="Okumura S."/>
            <person name="Shinpo S."/>
            <person name="Takeuchi C."/>
            <person name="Wada T."/>
            <person name="Watanabe A."/>
            <person name="Yamada M."/>
            <person name="Yasuda M."/>
            <person name="Sato S."/>
            <person name="de la Bastide M."/>
            <person name="Huang E."/>
            <person name="Spiegel L."/>
            <person name="Gnoj L."/>
            <person name="O'Shaughnessy A."/>
            <person name="Preston R."/>
            <person name="Habermann K."/>
            <person name="Murray J."/>
            <person name="Johnson D."/>
            <person name="Rohlfing T."/>
            <person name="Nelson J."/>
            <person name="Stoneking T."/>
            <person name="Pepin K."/>
            <person name="Spieth J."/>
            <person name="Sekhon M."/>
            <person name="Armstrong J."/>
            <person name="Becker M."/>
            <person name="Belter E."/>
            <person name="Cordum H."/>
            <person name="Cordes M."/>
            <person name="Courtney L."/>
            <person name="Courtney W."/>
            <person name="Dante M."/>
            <person name="Du H."/>
            <person name="Edwards J."/>
            <person name="Fryman J."/>
            <person name="Haakensen B."/>
            <person name="Lamar E."/>
            <person name="Latreille P."/>
            <person name="Leonard S."/>
            <person name="Meyer R."/>
            <person name="Mulvaney E."/>
            <person name="Ozersky P."/>
            <person name="Riley A."/>
            <person name="Strowmatt C."/>
            <person name="Wagner-McPherson C."/>
            <person name="Wollam A."/>
            <person name="Yoakum M."/>
            <person name="Bell M."/>
            <person name="Dedhia N."/>
            <person name="Parnell L."/>
            <person name="Shah R."/>
            <person name="Rodriguez M."/>
            <person name="Hoon See L."/>
            <person name="Vil D."/>
            <person name="Baker J."/>
            <person name="Kirchoff K."/>
            <person name="Toth K."/>
            <person name="King L."/>
            <person name="Bahret A."/>
            <person name="Miller B."/>
            <person name="Marra M.A."/>
            <person name="Martienssen R."/>
            <person name="McCombie W.R."/>
            <person name="Wilson R.K."/>
            <person name="Murphy G."/>
            <person name="Bancroft I."/>
            <person name="Volckaert G."/>
            <person name="Wambutt R."/>
            <person name="Duesterhoeft A."/>
            <person name="Stiekema W."/>
            <person name="Pohl T."/>
            <person name="Entian K.-D."/>
            <person name="Terryn N."/>
            <person name="Hartley N."/>
            <person name="Bent E."/>
            <person name="Johnson S."/>
            <person name="Langham S.-A."/>
            <person name="McCullagh B."/>
            <person name="Robben J."/>
            <person name="Grymonprez B."/>
            <person name="Zimmermann W."/>
            <person name="Ramsperger U."/>
            <person name="Wedler H."/>
            <person name="Balke K."/>
            <person name="Wedler E."/>
            <person name="Peters S."/>
            <person name="van Staveren M."/>
            <person name="Dirkse W."/>
            <person name="Mooijman P."/>
            <person name="Klein Lankhorst R."/>
            <person name="Weitzenegger T."/>
            <person name="Bothe G."/>
            <person name="Rose M."/>
            <person name="Hauf J."/>
            <person name="Berneiser S."/>
            <person name="Hempel S."/>
            <person name="Feldpausch M."/>
            <person name="Lamberth S."/>
            <person name="Villarroel R."/>
            <person name="Gielen J."/>
            <person name="Ardiles W."/>
            <person name="Bents O."/>
            <person name="Lemcke K."/>
            <person name="Kolesov G."/>
            <person name="Mayer K.F.X."/>
            <person name="Rudd S."/>
            <person name="Schoof H."/>
            <person name="Schueller C."/>
            <person name="Zaccaria P."/>
            <person name="Mewes H.-W."/>
            <person name="Bevan M."/>
            <person name="Fransz P.F."/>
        </authorList>
    </citation>
    <scope>NUCLEOTIDE SEQUENCE [LARGE SCALE GENOMIC DNA]</scope>
    <source>
        <strain>cv. Columbia</strain>
    </source>
</reference>
<reference key="2">
    <citation type="journal article" date="2017" name="Plant J.">
        <title>Araport11: a complete reannotation of the Arabidopsis thaliana reference genome.</title>
        <authorList>
            <person name="Cheng C.Y."/>
            <person name="Krishnakumar V."/>
            <person name="Chan A.P."/>
            <person name="Thibaud-Nissen F."/>
            <person name="Schobel S."/>
            <person name="Town C.D."/>
        </authorList>
    </citation>
    <scope>GENOME REANNOTATION</scope>
    <source>
        <strain>cv. Columbia</strain>
    </source>
</reference>
<reference key="3">
    <citation type="journal article" date="2003" name="Science">
        <title>Empirical analysis of transcriptional activity in the Arabidopsis genome.</title>
        <authorList>
            <person name="Yamada K."/>
            <person name="Lim J."/>
            <person name="Dale J.M."/>
            <person name="Chen H."/>
            <person name="Shinn P."/>
            <person name="Palm C.J."/>
            <person name="Southwick A.M."/>
            <person name="Wu H.C."/>
            <person name="Kim C.J."/>
            <person name="Nguyen M."/>
            <person name="Pham P.K."/>
            <person name="Cheuk R.F."/>
            <person name="Karlin-Newmann G."/>
            <person name="Liu S.X."/>
            <person name="Lam B."/>
            <person name="Sakano H."/>
            <person name="Wu T."/>
            <person name="Yu G."/>
            <person name="Miranda M."/>
            <person name="Quach H.L."/>
            <person name="Tripp M."/>
            <person name="Chang C.H."/>
            <person name="Lee J.M."/>
            <person name="Toriumi M.J."/>
            <person name="Chan M.M."/>
            <person name="Tang C.C."/>
            <person name="Onodera C.S."/>
            <person name="Deng J.M."/>
            <person name="Akiyama K."/>
            <person name="Ansari Y."/>
            <person name="Arakawa T."/>
            <person name="Banh J."/>
            <person name="Banno F."/>
            <person name="Bowser L."/>
            <person name="Brooks S.Y."/>
            <person name="Carninci P."/>
            <person name="Chao Q."/>
            <person name="Choy N."/>
            <person name="Enju A."/>
            <person name="Goldsmith A.D."/>
            <person name="Gurjal M."/>
            <person name="Hansen N.F."/>
            <person name="Hayashizaki Y."/>
            <person name="Johnson-Hopson C."/>
            <person name="Hsuan V.W."/>
            <person name="Iida K."/>
            <person name="Karnes M."/>
            <person name="Khan S."/>
            <person name="Koesema E."/>
            <person name="Ishida J."/>
            <person name="Jiang P.X."/>
            <person name="Jones T."/>
            <person name="Kawai J."/>
            <person name="Kamiya A."/>
            <person name="Meyers C."/>
            <person name="Nakajima M."/>
            <person name="Narusaka M."/>
            <person name="Seki M."/>
            <person name="Sakurai T."/>
            <person name="Satou M."/>
            <person name="Tamse R."/>
            <person name="Vaysberg M."/>
            <person name="Wallender E.K."/>
            <person name="Wong C."/>
            <person name="Yamamura Y."/>
            <person name="Yuan S."/>
            <person name="Shinozaki K."/>
            <person name="Davis R.W."/>
            <person name="Theologis A."/>
            <person name="Ecker J.R."/>
        </authorList>
    </citation>
    <scope>NUCLEOTIDE SEQUENCE [LARGE SCALE MRNA]</scope>
    <source>
        <strain>cv. Columbia</strain>
    </source>
</reference>
<reference key="4">
    <citation type="journal article" date="1993" name="Plant J.">
        <title>An inventory of 1152 expressed sequence tags obtained by partial sequencing of cDNAs from Arabidopsis thaliana.</title>
        <authorList>
            <person name="Hoefte H."/>
            <person name="Desprez T."/>
            <person name="Amselem J."/>
            <person name="Chiapello H."/>
            <person name="Rouze P."/>
            <person name="Caboche M."/>
            <person name="Moisan A."/>
            <person name="Jourjon M.-F."/>
            <person name="Charpenteau J.-L."/>
            <person name="Berthomieu P."/>
            <person name="Guerrier D."/>
            <person name="Giraudat J."/>
            <person name="Quigley F."/>
            <person name="Thomas F."/>
            <person name="Yu D.-Y."/>
            <person name="Mache R."/>
            <person name="Raynal M."/>
            <person name="Cooke R."/>
            <person name="Grellet F."/>
            <person name="Delseny M."/>
            <person name="Parmentier Y."/>
            <person name="de Marcillac G."/>
            <person name="Gigot C."/>
            <person name="Fleck J."/>
            <person name="Philipps G."/>
            <person name="Axelos M."/>
            <person name="Bardet C."/>
            <person name="Tremousaygue D."/>
            <person name="Lescure B."/>
        </authorList>
    </citation>
    <scope>NUCLEOTIDE SEQUENCE [LARGE SCALE MRNA] OF 1-108</scope>
    <source>
        <strain>cv. Columbia</strain>
        <tissue>Green siliques</tissue>
    </source>
</reference>
<reference key="5">
    <citation type="journal article" date="2001" name="Plant Physiol.">
        <title>The organization of cytoplasmic ribosomal protein genes in the Arabidopsis genome.</title>
        <authorList>
            <person name="Barakat A."/>
            <person name="Szick-Miranda K."/>
            <person name="Chang I.-F."/>
            <person name="Guyot R."/>
            <person name="Blanc G."/>
            <person name="Cooke R."/>
            <person name="Delseny M."/>
            <person name="Bailey-Serres J."/>
        </authorList>
    </citation>
    <scope>GENE FAMILY ORGANIZATION</scope>
    <scope>NOMENCLATURE</scope>
</reference>
<reference key="6">
    <citation type="journal article" date="2023" name="Plant Cell">
        <title>An updated nomenclature for plant ribosomal protein genes.</title>
        <authorList>
            <person name="Scarpin M.R."/>
            <person name="Busche M."/>
            <person name="Martinez R.E."/>
            <person name="Harper L.C."/>
            <person name="Reiser L."/>
            <person name="Szakonyi D."/>
            <person name="Merchante C."/>
            <person name="Lan T."/>
            <person name="Xiong W."/>
            <person name="Mo B."/>
            <person name="Tang G."/>
            <person name="Chen X."/>
            <person name="Bailey-Serres J."/>
            <person name="Browning K.S."/>
            <person name="Brunkard J.O."/>
        </authorList>
    </citation>
    <scope>NOMENCLATURE</scope>
</reference>
<feature type="chain" id="PRO_0000146472" description="Small ribosomal subunit protein uS12y">
    <location>
        <begin position="1"/>
        <end position="142"/>
    </location>
</feature>
<feature type="modified residue" description="Hydroxyproline" evidence="1">
    <location>
        <position position="61"/>
    </location>
</feature>
<feature type="sequence conflict" description="In Ref. 4; CAA79055." evidence="3" ref="4">
    <original>KL</original>
    <variation>NV</variation>
    <location>
        <begin position="12"/>
        <end position="13"/>
    </location>
</feature>
<protein>
    <recommendedName>
        <fullName evidence="2">Small ribosomal subunit protein uS12y</fullName>
    </recommendedName>
    <alternativeName>
        <fullName>40S ribosomal protein S23-2</fullName>
    </alternativeName>
    <alternativeName>
        <fullName>S12</fullName>
    </alternativeName>
</protein>
<dbReference type="EMBL" id="AL162973">
    <property type="protein sequence ID" value="CAB86050.1"/>
    <property type="molecule type" value="Genomic_DNA"/>
</dbReference>
<dbReference type="EMBL" id="CP002688">
    <property type="protein sequence ID" value="AED90540.1"/>
    <property type="molecule type" value="Genomic_DNA"/>
</dbReference>
<dbReference type="EMBL" id="AY039983">
    <property type="protein sequence ID" value="AAK64160.1"/>
    <property type="molecule type" value="mRNA"/>
</dbReference>
<dbReference type="EMBL" id="AY052330">
    <property type="protein sequence ID" value="AAK96523.1"/>
    <property type="molecule type" value="mRNA"/>
</dbReference>
<dbReference type="EMBL" id="AY113931">
    <property type="protein sequence ID" value="AAM44979.1"/>
    <property type="molecule type" value="mRNA"/>
</dbReference>
<dbReference type="EMBL" id="Z17759">
    <property type="protein sequence ID" value="CAA79055.1"/>
    <property type="molecule type" value="mRNA"/>
</dbReference>
<dbReference type="PIR" id="T48317">
    <property type="entry name" value="T48317"/>
</dbReference>
<dbReference type="RefSeq" id="NP_195916.1">
    <property type="nucleotide sequence ID" value="NM_120374.3"/>
</dbReference>
<dbReference type="SMR" id="P49201"/>
<dbReference type="BioGRID" id="17000">
    <property type="interactions" value="121"/>
</dbReference>
<dbReference type="FunCoup" id="P49201">
    <property type="interactions" value="3369"/>
</dbReference>
<dbReference type="IntAct" id="P49201">
    <property type="interactions" value="4"/>
</dbReference>
<dbReference type="STRING" id="3702.P49201"/>
<dbReference type="PaxDb" id="3702-AT5G02960.1"/>
<dbReference type="ProteomicsDB" id="226826"/>
<dbReference type="EnsemblPlants" id="AT5G02960.1">
    <property type="protein sequence ID" value="AT5G02960.1"/>
    <property type="gene ID" value="AT5G02960"/>
</dbReference>
<dbReference type="GeneID" id="831724"/>
<dbReference type="Gramene" id="AT5G02960.1">
    <property type="protein sequence ID" value="AT5G02960.1"/>
    <property type="gene ID" value="AT5G02960"/>
</dbReference>
<dbReference type="KEGG" id="ath:AT5G02960"/>
<dbReference type="Araport" id="AT5G02960"/>
<dbReference type="TAIR" id="AT5G02960"/>
<dbReference type="eggNOG" id="KOG1749">
    <property type="taxonomic scope" value="Eukaryota"/>
</dbReference>
<dbReference type="HOGENOM" id="CLU_115574_0_1_1"/>
<dbReference type="InParanoid" id="P49201"/>
<dbReference type="OMA" id="KFRWSQR"/>
<dbReference type="OrthoDB" id="1029762at2759"/>
<dbReference type="PhylomeDB" id="P49201"/>
<dbReference type="PRO" id="PR:P49201"/>
<dbReference type="Proteomes" id="UP000006548">
    <property type="component" value="Chromosome 5"/>
</dbReference>
<dbReference type="ExpressionAtlas" id="P49201">
    <property type="expression patterns" value="baseline and differential"/>
</dbReference>
<dbReference type="GO" id="GO:0022626">
    <property type="term" value="C:cytosolic ribosome"/>
    <property type="evidence" value="ECO:0007005"/>
    <property type="project" value="TAIR"/>
</dbReference>
<dbReference type="GO" id="GO:0022627">
    <property type="term" value="C:cytosolic small ribosomal subunit"/>
    <property type="evidence" value="ECO:0007005"/>
    <property type="project" value="TAIR"/>
</dbReference>
<dbReference type="GO" id="GO:0005886">
    <property type="term" value="C:plasma membrane"/>
    <property type="evidence" value="ECO:0007005"/>
    <property type="project" value="TAIR"/>
</dbReference>
<dbReference type="GO" id="GO:0003729">
    <property type="term" value="F:mRNA binding"/>
    <property type="evidence" value="ECO:0000314"/>
    <property type="project" value="TAIR"/>
</dbReference>
<dbReference type="GO" id="GO:0003735">
    <property type="term" value="F:structural constituent of ribosome"/>
    <property type="evidence" value="ECO:0000314"/>
    <property type="project" value="CAFA"/>
</dbReference>
<dbReference type="GO" id="GO:0006412">
    <property type="term" value="P:translation"/>
    <property type="evidence" value="ECO:0007669"/>
    <property type="project" value="InterPro"/>
</dbReference>
<dbReference type="CDD" id="cd03367">
    <property type="entry name" value="Ribosomal_S23"/>
    <property type="match status" value="1"/>
</dbReference>
<dbReference type="FunFam" id="2.40.50.140:FF:000007">
    <property type="entry name" value="40S ribosomal protein S23"/>
    <property type="match status" value="1"/>
</dbReference>
<dbReference type="Gene3D" id="2.40.50.140">
    <property type="entry name" value="Nucleic acid-binding proteins"/>
    <property type="match status" value="1"/>
</dbReference>
<dbReference type="InterPro" id="IPR012340">
    <property type="entry name" value="NA-bd_OB-fold"/>
</dbReference>
<dbReference type="InterPro" id="IPR006032">
    <property type="entry name" value="Ribosomal_uS12"/>
</dbReference>
<dbReference type="InterPro" id="IPR005680">
    <property type="entry name" value="Ribosomal_uS12_euk/arc"/>
</dbReference>
<dbReference type="NCBIfam" id="TIGR00982">
    <property type="entry name" value="uS12_E_A"/>
    <property type="match status" value="1"/>
</dbReference>
<dbReference type="PANTHER" id="PTHR11652">
    <property type="entry name" value="30S RIBOSOMAL PROTEIN S12 FAMILY MEMBER"/>
    <property type="match status" value="1"/>
</dbReference>
<dbReference type="Pfam" id="PF00164">
    <property type="entry name" value="Ribosom_S12_S23"/>
    <property type="match status" value="1"/>
</dbReference>
<dbReference type="PIRSF" id="PIRSF002133">
    <property type="entry name" value="Ribosomal_S12/S23"/>
    <property type="match status" value="1"/>
</dbReference>
<dbReference type="SUPFAM" id="SSF50249">
    <property type="entry name" value="Nucleic acid-binding proteins"/>
    <property type="match status" value="1"/>
</dbReference>
<dbReference type="PROSITE" id="PS00055">
    <property type="entry name" value="RIBOSOMAL_S12"/>
    <property type="match status" value="1"/>
</dbReference>